<accession>P0A8H7</accession>
<accession>P32130</accession>
<comment type="function">
    <text evidence="1">A GTPase-activating protein (GAP) that modifies Der/EngA GTPase function. May play a role in ribosome biogenesis.</text>
</comment>
<comment type="subunit">
    <text evidence="1">Interacts with Der.</text>
</comment>
<comment type="similarity">
    <text evidence="1">Belongs to the YihI family.</text>
</comment>
<organism>
    <name type="scientific">Shigella flexneri</name>
    <dbReference type="NCBI Taxonomy" id="623"/>
    <lineage>
        <taxon>Bacteria</taxon>
        <taxon>Pseudomonadati</taxon>
        <taxon>Pseudomonadota</taxon>
        <taxon>Gammaproteobacteria</taxon>
        <taxon>Enterobacterales</taxon>
        <taxon>Enterobacteriaceae</taxon>
        <taxon>Shigella</taxon>
    </lineage>
</organism>
<keyword id="KW-0343">GTPase activation</keyword>
<keyword id="KW-1185">Reference proteome</keyword>
<keyword id="KW-0690">Ribosome biogenesis</keyword>
<sequence>MKPSSSNSRSKGHAKARRKTREELDQEARDRKRQKKRRGHAPGSRAAGGNTTSGSKGQNAPKDPRIGSKTPIPLGVTEKVTKQHKPKSEKPMLSPQAELELLETDERLDALLERLEAGETLSAEEQSWVDAKLDRIDELMQKLGLSYDDDEEEEEDEKQEDMMRLLRGN</sequence>
<proteinExistence type="inferred from homology"/>
<reference key="1">
    <citation type="journal article" date="2002" name="Nucleic Acids Res.">
        <title>Genome sequence of Shigella flexneri 2a: insights into pathogenicity through comparison with genomes of Escherichia coli K12 and O157.</title>
        <authorList>
            <person name="Jin Q."/>
            <person name="Yuan Z."/>
            <person name="Xu J."/>
            <person name="Wang Y."/>
            <person name="Shen Y."/>
            <person name="Lu W."/>
            <person name="Wang J."/>
            <person name="Liu H."/>
            <person name="Yang J."/>
            <person name="Yang F."/>
            <person name="Zhang X."/>
            <person name="Zhang J."/>
            <person name="Yang G."/>
            <person name="Wu H."/>
            <person name="Qu D."/>
            <person name="Dong J."/>
            <person name="Sun L."/>
            <person name="Xue Y."/>
            <person name="Zhao A."/>
            <person name="Gao Y."/>
            <person name="Zhu J."/>
            <person name="Kan B."/>
            <person name="Ding K."/>
            <person name="Chen S."/>
            <person name="Cheng H."/>
            <person name="Yao Z."/>
            <person name="He B."/>
            <person name="Chen R."/>
            <person name="Ma D."/>
            <person name="Qiang B."/>
            <person name="Wen Y."/>
            <person name="Hou Y."/>
            <person name="Yu J."/>
        </authorList>
    </citation>
    <scope>NUCLEOTIDE SEQUENCE [LARGE SCALE GENOMIC DNA]</scope>
    <source>
        <strain>301 / Serotype 2a</strain>
    </source>
</reference>
<reference key="2">
    <citation type="journal article" date="2003" name="Infect. Immun.">
        <title>Complete genome sequence and comparative genomics of Shigella flexneri serotype 2a strain 2457T.</title>
        <authorList>
            <person name="Wei J."/>
            <person name="Goldberg M.B."/>
            <person name="Burland V."/>
            <person name="Venkatesan M.M."/>
            <person name="Deng W."/>
            <person name="Fournier G."/>
            <person name="Mayhew G.F."/>
            <person name="Plunkett G. III"/>
            <person name="Rose D.J."/>
            <person name="Darling A."/>
            <person name="Mau B."/>
            <person name="Perna N.T."/>
            <person name="Payne S.M."/>
            <person name="Runyen-Janecky L.J."/>
            <person name="Zhou S."/>
            <person name="Schwartz D.C."/>
            <person name="Blattner F.R."/>
        </authorList>
    </citation>
    <scope>NUCLEOTIDE SEQUENCE [LARGE SCALE GENOMIC DNA]</scope>
    <source>
        <strain>ATCC 700930 / 2457T / Serotype 2a</strain>
    </source>
</reference>
<feature type="chain" id="PRO_0000209594" description="Der GTPase-activating protein YihI">
    <location>
        <begin position="1"/>
        <end position="169"/>
    </location>
</feature>
<feature type="region of interest" description="Disordered" evidence="2">
    <location>
        <begin position="1"/>
        <end position="98"/>
    </location>
</feature>
<feature type="region of interest" description="Disordered" evidence="2">
    <location>
        <begin position="144"/>
        <end position="169"/>
    </location>
</feature>
<feature type="compositionally biased region" description="Basic residues" evidence="2">
    <location>
        <begin position="10"/>
        <end position="19"/>
    </location>
</feature>
<feature type="compositionally biased region" description="Basic and acidic residues" evidence="2">
    <location>
        <begin position="20"/>
        <end position="30"/>
    </location>
</feature>
<feature type="compositionally biased region" description="Basic residues" evidence="2">
    <location>
        <begin position="31"/>
        <end position="40"/>
    </location>
</feature>
<feature type="compositionally biased region" description="Polar residues" evidence="2">
    <location>
        <begin position="49"/>
        <end position="58"/>
    </location>
</feature>
<feature type="compositionally biased region" description="Acidic residues" evidence="2">
    <location>
        <begin position="147"/>
        <end position="159"/>
    </location>
</feature>
<feature type="compositionally biased region" description="Basic and acidic residues" evidence="2">
    <location>
        <begin position="160"/>
        <end position="169"/>
    </location>
</feature>
<dbReference type="EMBL" id="AE005674">
    <property type="protein sequence ID" value="AAN45371.1"/>
    <property type="molecule type" value="Genomic_DNA"/>
</dbReference>
<dbReference type="EMBL" id="AE014073">
    <property type="protein sequence ID" value="AAP18827.1"/>
    <property type="molecule type" value="Genomic_DNA"/>
</dbReference>
<dbReference type="RefSeq" id="NP_709664.1">
    <property type="nucleotide sequence ID" value="NC_004337.2"/>
</dbReference>
<dbReference type="RefSeq" id="WP_001295266.1">
    <property type="nucleotide sequence ID" value="NZ_WHSI01000064.1"/>
</dbReference>
<dbReference type="SMR" id="P0A8H7"/>
<dbReference type="STRING" id="198214.SF3936"/>
<dbReference type="PaxDb" id="198214-SF3936"/>
<dbReference type="GeneID" id="1027377"/>
<dbReference type="GeneID" id="75204333"/>
<dbReference type="KEGG" id="sfl:SF3936"/>
<dbReference type="KEGG" id="sfx:S3810"/>
<dbReference type="PATRIC" id="fig|198214.7.peg.4638"/>
<dbReference type="HOGENOM" id="CLU_094104_2_0_6"/>
<dbReference type="Proteomes" id="UP000001006">
    <property type="component" value="Chromosome"/>
</dbReference>
<dbReference type="Proteomes" id="UP000002673">
    <property type="component" value="Chromosome"/>
</dbReference>
<dbReference type="GO" id="GO:0005096">
    <property type="term" value="F:GTPase activator activity"/>
    <property type="evidence" value="ECO:0007669"/>
    <property type="project" value="UniProtKB-KW"/>
</dbReference>
<dbReference type="GO" id="GO:0042254">
    <property type="term" value="P:ribosome biogenesis"/>
    <property type="evidence" value="ECO:0007669"/>
    <property type="project" value="UniProtKB-KW"/>
</dbReference>
<dbReference type="HAMAP" id="MF_01058">
    <property type="entry name" value="GAP_YihI"/>
    <property type="match status" value="1"/>
</dbReference>
<dbReference type="InterPro" id="IPR007336">
    <property type="entry name" value="YihI"/>
</dbReference>
<dbReference type="NCBIfam" id="NF003560">
    <property type="entry name" value="PRK05244.1-1"/>
    <property type="match status" value="1"/>
</dbReference>
<dbReference type="Pfam" id="PF04220">
    <property type="entry name" value="YihI"/>
    <property type="match status" value="1"/>
</dbReference>
<protein>
    <recommendedName>
        <fullName evidence="1">Der GTPase-activating protein YihI</fullName>
    </recommendedName>
</protein>
<name>YIHI_SHIFL</name>
<evidence type="ECO:0000255" key="1">
    <source>
        <dbReference type="HAMAP-Rule" id="MF_01058"/>
    </source>
</evidence>
<evidence type="ECO:0000256" key="2">
    <source>
        <dbReference type="SAM" id="MobiDB-lite"/>
    </source>
</evidence>
<gene>
    <name evidence="1" type="primary">yihI</name>
    <name type="ordered locus">SF3936</name>
    <name type="ordered locus">S3810</name>
</gene>